<keyword id="KW-0963">Cytoplasm</keyword>
<keyword id="KW-1185">Reference proteome</keyword>
<keyword id="KW-0694">RNA-binding</keyword>
<gene>
    <name evidence="1" type="primary">smpB</name>
    <name type="ordered locus">Sfri_1094</name>
</gene>
<dbReference type="EMBL" id="CP000447">
    <property type="protein sequence ID" value="ABI70947.1"/>
    <property type="molecule type" value="Genomic_DNA"/>
</dbReference>
<dbReference type="RefSeq" id="WP_011636568.1">
    <property type="nucleotide sequence ID" value="NC_008345.1"/>
</dbReference>
<dbReference type="SMR" id="Q085W8"/>
<dbReference type="STRING" id="318167.Sfri_1094"/>
<dbReference type="KEGG" id="sfr:Sfri_1094"/>
<dbReference type="eggNOG" id="COG0691">
    <property type="taxonomic scope" value="Bacteria"/>
</dbReference>
<dbReference type="HOGENOM" id="CLU_108953_3_0_6"/>
<dbReference type="OrthoDB" id="9805462at2"/>
<dbReference type="Proteomes" id="UP000000684">
    <property type="component" value="Chromosome"/>
</dbReference>
<dbReference type="GO" id="GO:0005829">
    <property type="term" value="C:cytosol"/>
    <property type="evidence" value="ECO:0007669"/>
    <property type="project" value="TreeGrafter"/>
</dbReference>
<dbReference type="GO" id="GO:0003723">
    <property type="term" value="F:RNA binding"/>
    <property type="evidence" value="ECO:0007669"/>
    <property type="project" value="UniProtKB-UniRule"/>
</dbReference>
<dbReference type="GO" id="GO:0070929">
    <property type="term" value="P:trans-translation"/>
    <property type="evidence" value="ECO:0007669"/>
    <property type="project" value="UniProtKB-UniRule"/>
</dbReference>
<dbReference type="CDD" id="cd09294">
    <property type="entry name" value="SmpB"/>
    <property type="match status" value="1"/>
</dbReference>
<dbReference type="Gene3D" id="2.40.280.10">
    <property type="match status" value="1"/>
</dbReference>
<dbReference type="HAMAP" id="MF_00023">
    <property type="entry name" value="SmpB"/>
    <property type="match status" value="1"/>
</dbReference>
<dbReference type="InterPro" id="IPR023620">
    <property type="entry name" value="SmpB"/>
</dbReference>
<dbReference type="InterPro" id="IPR000037">
    <property type="entry name" value="SsrA-bd_prot"/>
</dbReference>
<dbReference type="InterPro" id="IPR020081">
    <property type="entry name" value="SsrA-bd_prot_CS"/>
</dbReference>
<dbReference type="NCBIfam" id="NF003843">
    <property type="entry name" value="PRK05422.1"/>
    <property type="match status" value="1"/>
</dbReference>
<dbReference type="NCBIfam" id="TIGR00086">
    <property type="entry name" value="smpB"/>
    <property type="match status" value="1"/>
</dbReference>
<dbReference type="PANTHER" id="PTHR30308:SF2">
    <property type="entry name" value="SSRA-BINDING PROTEIN"/>
    <property type="match status" value="1"/>
</dbReference>
<dbReference type="PANTHER" id="PTHR30308">
    <property type="entry name" value="TMRNA-BINDING COMPONENT OF TRANS-TRANSLATION TAGGING COMPLEX"/>
    <property type="match status" value="1"/>
</dbReference>
<dbReference type="Pfam" id="PF01668">
    <property type="entry name" value="SmpB"/>
    <property type="match status" value="1"/>
</dbReference>
<dbReference type="SUPFAM" id="SSF74982">
    <property type="entry name" value="Small protein B (SmpB)"/>
    <property type="match status" value="1"/>
</dbReference>
<dbReference type="PROSITE" id="PS01317">
    <property type="entry name" value="SSRP"/>
    <property type="match status" value="1"/>
</dbReference>
<comment type="function">
    <text evidence="1">Required for rescue of stalled ribosomes mediated by trans-translation. Binds to transfer-messenger RNA (tmRNA), required for stable association of tmRNA with ribosomes. tmRNA and SmpB together mimic tRNA shape, replacing the anticodon stem-loop with SmpB. tmRNA is encoded by the ssrA gene; the 2 termini fold to resemble tRNA(Ala) and it encodes a 'tag peptide', a short internal open reading frame. During trans-translation Ala-aminoacylated tmRNA acts like a tRNA, entering the A-site of stalled ribosomes, displacing the stalled mRNA. The ribosome then switches to translate the ORF on the tmRNA; the nascent peptide is terminated with the 'tag peptide' encoded by the tmRNA and targeted for degradation. The ribosome is freed to recommence translation, which seems to be the essential function of trans-translation.</text>
</comment>
<comment type="subcellular location">
    <subcellularLocation>
        <location evidence="1">Cytoplasm</location>
    </subcellularLocation>
    <text evidence="1">The tmRNA-SmpB complex associates with stalled 70S ribosomes.</text>
</comment>
<comment type="similarity">
    <text evidence="1">Belongs to the SmpB family.</text>
</comment>
<accession>Q085W8</accession>
<feature type="chain" id="PRO_1000002139" description="SsrA-binding protein">
    <location>
        <begin position="1"/>
        <end position="162"/>
    </location>
</feature>
<protein>
    <recommendedName>
        <fullName evidence="1">SsrA-binding protein</fullName>
    </recommendedName>
    <alternativeName>
        <fullName evidence="1">Small protein B</fullName>
    </alternativeName>
</protein>
<proteinExistence type="inferred from homology"/>
<sequence>MVKKKSANASASIARNKRATFEYRIEDKIEAGLQLMGWEVKSIRMGKVNLSDCYVYIKEGEAFMHGCTIQPLNTASTHVICDPIRTKKLLLKRSEIDKLAGLIERQGYTLVPLSMYWRKGAWVKVEIGLGKGKKDHDKREDTKEREWKIEKARVMKKDKENA</sequence>
<name>SSRP_SHEFN</name>
<organism>
    <name type="scientific">Shewanella frigidimarina (strain NCIMB 400)</name>
    <dbReference type="NCBI Taxonomy" id="318167"/>
    <lineage>
        <taxon>Bacteria</taxon>
        <taxon>Pseudomonadati</taxon>
        <taxon>Pseudomonadota</taxon>
        <taxon>Gammaproteobacteria</taxon>
        <taxon>Alteromonadales</taxon>
        <taxon>Shewanellaceae</taxon>
        <taxon>Shewanella</taxon>
    </lineage>
</organism>
<evidence type="ECO:0000255" key="1">
    <source>
        <dbReference type="HAMAP-Rule" id="MF_00023"/>
    </source>
</evidence>
<reference key="1">
    <citation type="submission" date="2006-08" db="EMBL/GenBank/DDBJ databases">
        <title>Complete sequence of Shewanella frigidimarina NCIMB 400.</title>
        <authorList>
            <consortium name="US DOE Joint Genome Institute"/>
            <person name="Copeland A."/>
            <person name="Lucas S."/>
            <person name="Lapidus A."/>
            <person name="Barry K."/>
            <person name="Detter J.C."/>
            <person name="Glavina del Rio T."/>
            <person name="Hammon N."/>
            <person name="Israni S."/>
            <person name="Dalin E."/>
            <person name="Tice H."/>
            <person name="Pitluck S."/>
            <person name="Fredrickson J.K."/>
            <person name="Kolker E."/>
            <person name="McCuel L.A."/>
            <person name="DiChristina T."/>
            <person name="Nealson K.H."/>
            <person name="Newman D."/>
            <person name="Tiedje J.M."/>
            <person name="Zhou J."/>
            <person name="Romine M.F."/>
            <person name="Culley D.E."/>
            <person name="Serres M."/>
            <person name="Chertkov O."/>
            <person name="Brettin T."/>
            <person name="Bruce D."/>
            <person name="Han C."/>
            <person name="Tapia R."/>
            <person name="Gilna P."/>
            <person name="Schmutz J."/>
            <person name="Larimer F."/>
            <person name="Land M."/>
            <person name="Hauser L."/>
            <person name="Kyrpides N."/>
            <person name="Mikhailova N."/>
            <person name="Richardson P."/>
        </authorList>
    </citation>
    <scope>NUCLEOTIDE SEQUENCE [LARGE SCALE GENOMIC DNA]</scope>
    <source>
        <strain>NCIMB 400</strain>
    </source>
</reference>